<accession>A6QG41</accession>
<protein>
    <recommendedName>
        <fullName evidence="1">Ribonuclease HIII</fullName>
        <shortName evidence="1">RNase HIII</shortName>
        <ecNumber evidence="1">3.1.26.4</ecNumber>
    </recommendedName>
</protein>
<sequence length="312" mass="35055">MANIVFKLSDKDITTLMSRISFDTENLPQGMKARAKYQNTTVNIYQSGKVMFQGNHAEAVSEELLPQHSQLNTNKTKKKNMANSFLEQTLMYDQFNCIGSDEAGSGDYFGPLTVCAAFVTKEHVPILKTLGVDDSKKLTDTKIVELAEQLVTFIPHSLLTLHNEKYNIQQAKGWTQVKMKAALHNEAIKNVLEKIDSSQLDYIVIDQFAKREVYSHYALSDIPLPKKTKFETKGESKSLAIAVASIISRYAFVTYMDQISKNINMTIPKGAGAKVDVIAAKIIKKYGLSRLDTISKKHFKNREKAQKILKPL</sequence>
<feature type="chain" id="PRO_1000071140" description="Ribonuclease HIII">
    <location>
        <begin position="1"/>
        <end position="312"/>
    </location>
</feature>
<feature type="domain" description="RNase H type-2" evidence="2">
    <location>
        <begin position="95"/>
        <end position="311"/>
    </location>
</feature>
<feature type="binding site" evidence="1">
    <location>
        <position position="101"/>
    </location>
    <ligand>
        <name>a divalent metal cation</name>
        <dbReference type="ChEBI" id="CHEBI:60240"/>
    </ligand>
</feature>
<feature type="binding site" evidence="1">
    <location>
        <position position="102"/>
    </location>
    <ligand>
        <name>a divalent metal cation</name>
        <dbReference type="ChEBI" id="CHEBI:60240"/>
    </ligand>
</feature>
<feature type="binding site" evidence="1">
    <location>
        <position position="206"/>
    </location>
    <ligand>
        <name>a divalent metal cation</name>
        <dbReference type="ChEBI" id="CHEBI:60240"/>
    </ligand>
</feature>
<gene>
    <name evidence="1" type="primary">rnhC</name>
    <name type="ordered locus">NWMN_1051</name>
</gene>
<evidence type="ECO:0000255" key="1">
    <source>
        <dbReference type="HAMAP-Rule" id="MF_00053"/>
    </source>
</evidence>
<evidence type="ECO:0000255" key="2">
    <source>
        <dbReference type="PROSITE-ProRule" id="PRU01319"/>
    </source>
</evidence>
<organism>
    <name type="scientific">Staphylococcus aureus (strain Newman)</name>
    <dbReference type="NCBI Taxonomy" id="426430"/>
    <lineage>
        <taxon>Bacteria</taxon>
        <taxon>Bacillati</taxon>
        <taxon>Bacillota</taxon>
        <taxon>Bacilli</taxon>
        <taxon>Bacillales</taxon>
        <taxon>Staphylococcaceae</taxon>
        <taxon>Staphylococcus</taxon>
    </lineage>
</organism>
<keyword id="KW-0963">Cytoplasm</keyword>
<keyword id="KW-0255">Endonuclease</keyword>
<keyword id="KW-0378">Hydrolase</keyword>
<keyword id="KW-0460">Magnesium</keyword>
<keyword id="KW-0479">Metal-binding</keyword>
<keyword id="KW-0540">Nuclease</keyword>
<dbReference type="EC" id="3.1.26.4" evidence="1"/>
<dbReference type="EMBL" id="AP009351">
    <property type="protein sequence ID" value="BAF67323.1"/>
    <property type="molecule type" value="Genomic_DNA"/>
</dbReference>
<dbReference type="RefSeq" id="WP_001284258.1">
    <property type="nucleotide sequence ID" value="NZ_JBBIAE010000001.1"/>
</dbReference>
<dbReference type="SMR" id="A6QG41"/>
<dbReference type="KEGG" id="sae:NWMN_1051"/>
<dbReference type="HOGENOM" id="CLU_059546_1_0_9"/>
<dbReference type="Proteomes" id="UP000006386">
    <property type="component" value="Chromosome"/>
</dbReference>
<dbReference type="GO" id="GO:0005737">
    <property type="term" value="C:cytoplasm"/>
    <property type="evidence" value="ECO:0007669"/>
    <property type="project" value="UniProtKB-SubCell"/>
</dbReference>
<dbReference type="GO" id="GO:0032299">
    <property type="term" value="C:ribonuclease H2 complex"/>
    <property type="evidence" value="ECO:0007669"/>
    <property type="project" value="TreeGrafter"/>
</dbReference>
<dbReference type="GO" id="GO:0000287">
    <property type="term" value="F:magnesium ion binding"/>
    <property type="evidence" value="ECO:0007669"/>
    <property type="project" value="UniProtKB-UniRule"/>
</dbReference>
<dbReference type="GO" id="GO:0003723">
    <property type="term" value="F:RNA binding"/>
    <property type="evidence" value="ECO:0007669"/>
    <property type="project" value="InterPro"/>
</dbReference>
<dbReference type="GO" id="GO:0004523">
    <property type="term" value="F:RNA-DNA hybrid ribonuclease activity"/>
    <property type="evidence" value="ECO:0007669"/>
    <property type="project" value="UniProtKB-UniRule"/>
</dbReference>
<dbReference type="GO" id="GO:0043137">
    <property type="term" value="P:DNA replication, removal of RNA primer"/>
    <property type="evidence" value="ECO:0007669"/>
    <property type="project" value="TreeGrafter"/>
</dbReference>
<dbReference type="GO" id="GO:0006298">
    <property type="term" value="P:mismatch repair"/>
    <property type="evidence" value="ECO:0007669"/>
    <property type="project" value="TreeGrafter"/>
</dbReference>
<dbReference type="CDD" id="cd06590">
    <property type="entry name" value="RNase_HII_bacteria_HIII_like"/>
    <property type="match status" value="1"/>
</dbReference>
<dbReference type="CDD" id="cd14796">
    <property type="entry name" value="RNAse_HIII_N"/>
    <property type="match status" value="1"/>
</dbReference>
<dbReference type="FunFam" id="3.30.420.10:FF:000047">
    <property type="entry name" value="Ribonuclease HIII"/>
    <property type="match status" value="1"/>
</dbReference>
<dbReference type="Gene3D" id="3.30.420.10">
    <property type="entry name" value="Ribonuclease H-like superfamily/Ribonuclease H"/>
    <property type="match status" value="1"/>
</dbReference>
<dbReference type="Gene3D" id="3.30.310.10">
    <property type="entry name" value="TATA-Binding Protein"/>
    <property type="match status" value="1"/>
</dbReference>
<dbReference type="HAMAP" id="MF_00053">
    <property type="entry name" value="RNase_HIII"/>
    <property type="match status" value="1"/>
</dbReference>
<dbReference type="InterPro" id="IPR001352">
    <property type="entry name" value="RNase_HII/HIII"/>
</dbReference>
<dbReference type="InterPro" id="IPR024567">
    <property type="entry name" value="RNase_HII/HIII_dom"/>
</dbReference>
<dbReference type="InterPro" id="IPR004641">
    <property type="entry name" value="RNase_HIII"/>
</dbReference>
<dbReference type="InterPro" id="IPR024568">
    <property type="entry name" value="RNase_HIII_N"/>
</dbReference>
<dbReference type="InterPro" id="IPR012337">
    <property type="entry name" value="RNaseH-like_sf"/>
</dbReference>
<dbReference type="InterPro" id="IPR036397">
    <property type="entry name" value="RNaseH_sf"/>
</dbReference>
<dbReference type="InterPro" id="IPR012295">
    <property type="entry name" value="TBP_dom_sf"/>
</dbReference>
<dbReference type="NCBIfam" id="TIGR00716">
    <property type="entry name" value="rnhC"/>
    <property type="match status" value="1"/>
</dbReference>
<dbReference type="PANTHER" id="PTHR10954:SF23">
    <property type="entry name" value="RIBONUCLEASE"/>
    <property type="match status" value="1"/>
</dbReference>
<dbReference type="PANTHER" id="PTHR10954">
    <property type="entry name" value="RIBONUCLEASE H2 SUBUNIT A"/>
    <property type="match status" value="1"/>
</dbReference>
<dbReference type="Pfam" id="PF11858">
    <property type="entry name" value="DUF3378"/>
    <property type="match status" value="1"/>
</dbReference>
<dbReference type="Pfam" id="PF01351">
    <property type="entry name" value="RNase_HII"/>
    <property type="match status" value="1"/>
</dbReference>
<dbReference type="PIRSF" id="PIRSF037748">
    <property type="entry name" value="RnhC"/>
    <property type="match status" value="1"/>
</dbReference>
<dbReference type="SUPFAM" id="SSF53098">
    <property type="entry name" value="Ribonuclease H-like"/>
    <property type="match status" value="1"/>
</dbReference>
<dbReference type="PROSITE" id="PS51975">
    <property type="entry name" value="RNASE_H_2"/>
    <property type="match status" value="1"/>
</dbReference>
<proteinExistence type="inferred from homology"/>
<name>RNH3_STAAE</name>
<comment type="function">
    <text evidence="1">Endonuclease that specifically degrades the RNA of RNA-DNA hybrids.</text>
</comment>
<comment type="catalytic activity">
    <reaction evidence="1">
        <text>Endonucleolytic cleavage to 5'-phosphomonoester.</text>
        <dbReference type="EC" id="3.1.26.4"/>
    </reaction>
</comment>
<comment type="cofactor">
    <cofactor evidence="1">
        <name>Mn(2+)</name>
        <dbReference type="ChEBI" id="CHEBI:29035"/>
    </cofactor>
    <cofactor evidence="1">
        <name>Mg(2+)</name>
        <dbReference type="ChEBI" id="CHEBI:18420"/>
    </cofactor>
    <text evidence="1">Manganese or magnesium. Binds 1 divalent metal ion per monomer in the absence of substrate. May bind a second metal ion after substrate binding.</text>
</comment>
<comment type="subcellular location">
    <subcellularLocation>
        <location evidence="1">Cytoplasm</location>
    </subcellularLocation>
</comment>
<comment type="similarity">
    <text evidence="1">Belongs to the RNase HII family. RnhC subfamily.</text>
</comment>
<reference key="1">
    <citation type="journal article" date="2008" name="J. Bacteriol.">
        <title>Genome sequence of Staphylococcus aureus strain Newman and comparative analysis of staphylococcal genomes: polymorphism and evolution of two major pathogenicity islands.</title>
        <authorList>
            <person name="Baba T."/>
            <person name="Bae T."/>
            <person name="Schneewind O."/>
            <person name="Takeuchi F."/>
            <person name="Hiramatsu K."/>
        </authorList>
    </citation>
    <scope>NUCLEOTIDE SEQUENCE [LARGE SCALE GENOMIC DNA]</scope>
    <source>
        <strain>Newman</strain>
    </source>
</reference>